<dbReference type="EMBL" id="CP000948">
    <property type="protein sequence ID" value="ACB01598.1"/>
    <property type="molecule type" value="Genomic_DNA"/>
</dbReference>
<dbReference type="RefSeq" id="WP_000467098.1">
    <property type="nucleotide sequence ID" value="NC_010473.1"/>
</dbReference>
<dbReference type="SMR" id="B1XFQ8"/>
<dbReference type="KEGG" id="ecd:ECDH10B_0427"/>
<dbReference type="HOGENOM" id="CLU_140930_0_0_6"/>
<dbReference type="GO" id="GO:0043590">
    <property type="term" value="C:bacterial nucleoid"/>
    <property type="evidence" value="ECO:0007669"/>
    <property type="project" value="UniProtKB-UniRule"/>
</dbReference>
<dbReference type="GO" id="GO:0005829">
    <property type="term" value="C:cytosol"/>
    <property type="evidence" value="ECO:0007669"/>
    <property type="project" value="TreeGrafter"/>
</dbReference>
<dbReference type="GO" id="GO:0003677">
    <property type="term" value="F:DNA binding"/>
    <property type="evidence" value="ECO:0007669"/>
    <property type="project" value="UniProtKB-UniRule"/>
</dbReference>
<dbReference type="FunFam" id="3.30.1310.10:FF:000001">
    <property type="entry name" value="Nucleoid-associated protein YbaB"/>
    <property type="match status" value="1"/>
</dbReference>
<dbReference type="Gene3D" id="3.30.1310.10">
    <property type="entry name" value="Nucleoid-associated protein YbaB-like domain"/>
    <property type="match status" value="1"/>
</dbReference>
<dbReference type="HAMAP" id="MF_00274">
    <property type="entry name" value="DNA_YbaB_EbfC"/>
    <property type="match status" value="1"/>
</dbReference>
<dbReference type="InterPro" id="IPR036894">
    <property type="entry name" value="YbaB-like_sf"/>
</dbReference>
<dbReference type="InterPro" id="IPR004401">
    <property type="entry name" value="YbaB/EbfC"/>
</dbReference>
<dbReference type="NCBIfam" id="TIGR00103">
    <property type="entry name" value="DNA_YbaB_EbfC"/>
    <property type="match status" value="1"/>
</dbReference>
<dbReference type="PANTHER" id="PTHR33449">
    <property type="entry name" value="NUCLEOID-ASSOCIATED PROTEIN YBAB"/>
    <property type="match status" value="1"/>
</dbReference>
<dbReference type="PANTHER" id="PTHR33449:SF1">
    <property type="entry name" value="NUCLEOID-ASSOCIATED PROTEIN YBAB"/>
    <property type="match status" value="1"/>
</dbReference>
<dbReference type="Pfam" id="PF02575">
    <property type="entry name" value="YbaB_DNA_bd"/>
    <property type="match status" value="1"/>
</dbReference>
<dbReference type="PIRSF" id="PIRSF004555">
    <property type="entry name" value="UCP004555"/>
    <property type="match status" value="1"/>
</dbReference>
<dbReference type="SUPFAM" id="SSF82607">
    <property type="entry name" value="YbaB-like"/>
    <property type="match status" value="1"/>
</dbReference>
<protein>
    <recommendedName>
        <fullName evidence="1">Nucleoid-associated protein YbaB</fullName>
    </recommendedName>
</protein>
<feature type="chain" id="PRO_1000114611" description="Nucleoid-associated protein YbaB">
    <location>
        <begin position="1"/>
        <end position="109"/>
    </location>
</feature>
<accession>B1XFQ8</accession>
<name>YBAB_ECODH</name>
<keyword id="KW-0963">Cytoplasm</keyword>
<keyword id="KW-0238">DNA-binding</keyword>
<organism>
    <name type="scientific">Escherichia coli (strain K12 / DH10B)</name>
    <dbReference type="NCBI Taxonomy" id="316385"/>
    <lineage>
        <taxon>Bacteria</taxon>
        <taxon>Pseudomonadati</taxon>
        <taxon>Pseudomonadota</taxon>
        <taxon>Gammaproteobacteria</taxon>
        <taxon>Enterobacterales</taxon>
        <taxon>Enterobacteriaceae</taxon>
        <taxon>Escherichia</taxon>
    </lineage>
</organism>
<reference key="1">
    <citation type="journal article" date="2008" name="J. Bacteriol.">
        <title>The complete genome sequence of Escherichia coli DH10B: insights into the biology of a laboratory workhorse.</title>
        <authorList>
            <person name="Durfee T."/>
            <person name="Nelson R."/>
            <person name="Baldwin S."/>
            <person name="Plunkett G. III"/>
            <person name="Burland V."/>
            <person name="Mau B."/>
            <person name="Petrosino J.F."/>
            <person name="Qin X."/>
            <person name="Muzny D.M."/>
            <person name="Ayele M."/>
            <person name="Gibbs R.A."/>
            <person name="Csorgo B."/>
            <person name="Posfai G."/>
            <person name="Weinstock G.M."/>
            <person name="Blattner F.R."/>
        </authorList>
    </citation>
    <scope>NUCLEOTIDE SEQUENCE [LARGE SCALE GENOMIC DNA]</scope>
    <source>
        <strain>K12 / DH10B</strain>
    </source>
</reference>
<sequence>MFGKGGLGNLMKQAQQMQEKMQKMQEEIAQLEVTGESGAGLVKVTINGAHNCRRVEIDPSLLEDDKEMLEDLVAAAFNDAARRIEETQKEKMASVSSGMQLPPGFKMPF</sequence>
<gene>
    <name evidence="1" type="primary">ybaB</name>
    <name type="ordered locus">ECDH10B_0427</name>
</gene>
<comment type="function">
    <text evidence="1">Binds to DNA and alters its conformation. May be involved in regulation of gene expression, nucleoid organization and DNA protection.</text>
</comment>
<comment type="subunit">
    <text evidence="1">Homodimer.</text>
</comment>
<comment type="subcellular location">
    <subcellularLocation>
        <location evidence="1">Cytoplasm</location>
        <location evidence="1">Nucleoid</location>
    </subcellularLocation>
</comment>
<comment type="similarity">
    <text evidence="1">Belongs to the YbaB/EbfC family.</text>
</comment>
<proteinExistence type="inferred from homology"/>
<evidence type="ECO:0000255" key="1">
    <source>
        <dbReference type="HAMAP-Rule" id="MF_00274"/>
    </source>
</evidence>